<evidence type="ECO:0000255" key="1">
    <source>
        <dbReference type="HAMAP-Rule" id="MF_00418"/>
    </source>
</evidence>
<evidence type="ECO:0000305" key="2"/>
<proteinExistence type="inferred from homology"/>
<keyword id="KW-0028">Amino-acid biosynthesis</keyword>
<keyword id="KW-0963">Cytoplasm</keyword>
<keyword id="KW-0220">Diaminopimelate biosynthesis</keyword>
<keyword id="KW-0456">Lyase</keyword>
<keyword id="KW-0457">Lysine biosynthesis</keyword>
<keyword id="KW-0704">Schiff base</keyword>
<accession>B4SRX7</accession>
<organism>
    <name type="scientific">Stenotrophomonas maltophilia (strain R551-3)</name>
    <dbReference type="NCBI Taxonomy" id="391008"/>
    <lineage>
        <taxon>Bacteria</taxon>
        <taxon>Pseudomonadati</taxon>
        <taxon>Pseudomonadota</taxon>
        <taxon>Gammaproteobacteria</taxon>
        <taxon>Lysobacterales</taxon>
        <taxon>Lysobacteraceae</taxon>
        <taxon>Stenotrophomonas</taxon>
        <taxon>Stenotrophomonas maltophilia group</taxon>
    </lineage>
</organism>
<comment type="function">
    <text evidence="1">Catalyzes the condensation of (S)-aspartate-beta-semialdehyde [(S)-ASA] and pyruvate to 4-hydroxy-tetrahydrodipicolinate (HTPA).</text>
</comment>
<comment type="catalytic activity">
    <reaction evidence="1">
        <text>L-aspartate 4-semialdehyde + pyruvate = (2S,4S)-4-hydroxy-2,3,4,5-tetrahydrodipicolinate + H2O + H(+)</text>
        <dbReference type="Rhea" id="RHEA:34171"/>
        <dbReference type="ChEBI" id="CHEBI:15361"/>
        <dbReference type="ChEBI" id="CHEBI:15377"/>
        <dbReference type="ChEBI" id="CHEBI:15378"/>
        <dbReference type="ChEBI" id="CHEBI:67139"/>
        <dbReference type="ChEBI" id="CHEBI:537519"/>
        <dbReference type="EC" id="4.3.3.7"/>
    </reaction>
</comment>
<comment type="pathway">
    <text evidence="1">Amino-acid biosynthesis; L-lysine biosynthesis via DAP pathway; (S)-tetrahydrodipicolinate from L-aspartate: step 3/4.</text>
</comment>
<comment type="subunit">
    <text evidence="1">Homotetramer; dimer of dimers.</text>
</comment>
<comment type="subcellular location">
    <subcellularLocation>
        <location evidence="1">Cytoplasm</location>
    </subcellularLocation>
</comment>
<comment type="similarity">
    <text evidence="1">Belongs to the DapA family.</text>
</comment>
<comment type="caution">
    <text evidence="2">Was originally thought to be a dihydrodipicolinate synthase (DHDPS), catalyzing the condensation of (S)-aspartate-beta-semialdehyde [(S)-ASA] and pyruvate to dihydrodipicolinate (DHDP). However, it was shown in E.coli that the product of the enzymatic reaction is not dihydrodipicolinate but in fact (4S)-4-hydroxy-2,3,4,5-tetrahydro-(2S)-dipicolinic acid (HTPA), and that the consecutive dehydration reaction leading to DHDP is not spontaneous but catalyzed by DapB.</text>
</comment>
<feature type="chain" id="PRO_1000124066" description="4-hydroxy-tetrahydrodipicolinate synthase">
    <location>
        <begin position="1"/>
        <end position="297"/>
    </location>
</feature>
<feature type="active site" description="Proton donor/acceptor" evidence="1">
    <location>
        <position position="134"/>
    </location>
</feature>
<feature type="active site" description="Schiff-base intermediate with substrate" evidence="1">
    <location>
        <position position="162"/>
    </location>
</feature>
<feature type="binding site" evidence="1">
    <location>
        <position position="46"/>
    </location>
    <ligand>
        <name>pyruvate</name>
        <dbReference type="ChEBI" id="CHEBI:15361"/>
    </ligand>
</feature>
<feature type="binding site" evidence="1">
    <location>
        <position position="204"/>
    </location>
    <ligand>
        <name>pyruvate</name>
        <dbReference type="ChEBI" id="CHEBI:15361"/>
    </ligand>
</feature>
<feature type="site" description="Part of a proton relay during catalysis" evidence="1">
    <location>
        <position position="45"/>
    </location>
</feature>
<feature type="site" description="Part of a proton relay during catalysis" evidence="1">
    <location>
        <position position="108"/>
    </location>
</feature>
<gene>
    <name evidence="1" type="primary">dapA</name>
    <name type="ordered locus">Smal_1511</name>
</gene>
<protein>
    <recommendedName>
        <fullName evidence="1">4-hydroxy-tetrahydrodipicolinate synthase</fullName>
        <shortName evidence="1">HTPA synthase</shortName>
        <ecNumber evidence="1">4.3.3.7</ecNumber>
    </recommendedName>
</protein>
<sequence length="297" mass="30858">MSLSGLITALATPFRADGALDPDGWQRLLHLQLEGGVHGVVVAGSTGEAATLTDAEYDQLLASAVERIGGRIPVMAGTGLSGTAKTIEQTRRAAALGASHALVVTPPYVRPTQAGLIAHYRAVADQGGLPVVLYNVPGRTGCDMQPETVAELASHPNIVGIKEAVGDTGRVQALLALRSAQFAVLSGDDGTAARSIRAGIDGLISVGSNVLPGAYRRMCELAAAHDHEATESWDGRLQPFHEFCGVEPNPIPVKALLRRIGIGHDLRLPLLPLSAVHHPAADHLAGDIAALEALSSH</sequence>
<reference key="1">
    <citation type="submission" date="2008-06" db="EMBL/GenBank/DDBJ databases">
        <title>Complete sequence of Stenotrophomonas maltophilia R551-3.</title>
        <authorList>
            <consortium name="US DOE Joint Genome Institute"/>
            <person name="Lucas S."/>
            <person name="Copeland A."/>
            <person name="Lapidus A."/>
            <person name="Glavina del Rio T."/>
            <person name="Dalin E."/>
            <person name="Tice H."/>
            <person name="Pitluck S."/>
            <person name="Chain P."/>
            <person name="Malfatti S."/>
            <person name="Shin M."/>
            <person name="Vergez L."/>
            <person name="Lang D."/>
            <person name="Schmutz J."/>
            <person name="Larimer F."/>
            <person name="Land M."/>
            <person name="Hauser L."/>
            <person name="Kyrpides N."/>
            <person name="Mikhailova N."/>
            <person name="Taghavi S."/>
            <person name="Monchy S."/>
            <person name="Newman L."/>
            <person name="Vangronsveld J."/>
            <person name="van der Lelie D."/>
            <person name="Richardson P."/>
        </authorList>
    </citation>
    <scope>NUCLEOTIDE SEQUENCE [LARGE SCALE GENOMIC DNA]</scope>
    <source>
        <strain>R551-3</strain>
    </source>
</reference>
<dbReference type="EC" id="4.3.3.7" evidence="1"/>
<dbReference type="EMBL" id="CP001111">
    <property type="protein sequence ID" value="ACF51216.1"/>
    <property type="molecule type" value="Genomic_DNA"/>
</dbReference>
<dbReference type="RefSeq" id="WP_012510696.1">
    <property type="nucleotide sequence ID" value="NC_011071.1"/>
</dbReference>
<dbReference type="SMR" id="B4SRX7"/>
<dbReference type="STRING" id="391008.Smal_1511"/>
<dbReference type="KEGG" id="smt:Smal_1511"/>
<dbReference type="eggNOG" id="COG0329">
    <property type="taxonomic scope" value="Bacteria"/>
</dbReference>
<dbReference type="HOGENOM" id="CLU_049343_7_1_6"/>
<dbReference type="OrthoDB" id="9782828at2"/>
<dbReference type="UniPathway" id="UPA00034">
    <property type="reaction ID" value="UER00017"/>
</dbReference>
<dbReference type="Proteomes" id="UP000001867">
    <property type="component" value="Chromosome"/>
</dbReference>
<dbReference type="GO" id="GO:0005829">
    <property type="term" value="C:cytosol"/>
    <property type="evidence" value="ECO:0007669"/>
    <property type="project" value="TreeGrafter"/>
</dbReference>
<dbReference type="GO" id="GO:0008840">
    <property type="term" value="F:4-hydroxy-tetrahydrodipicolinate synthase activity"/>
    <property type="evidence" value="ECO:0007669"/>
    <property type="project" value="UniProtKB-UniRule"/>
</dbReference>
<dbReference type="GO" id="GO:0019877">
    <property type="term" value="P:diaminopimelate biosynthetic process"/>
    <property type="evidence" value="ECO:0007669"/>
    <property type="project" value="UniProtKB-UniRule"/>
</dbReference>
<dbReference type="GO" id="GO:0009089">
    <property type="term" value="P:lysine biosynthetic process via diaminopimelate"/>
    <property type="evidence" value="ECO:0007669"/>
    <property type="project" value="UniProtKB-UniRule"/>
</dbReference>
<dbReference type="CDD" id="cd00950">
    <property type="entry name" value="DHDPS"/>
    <property type="match status" value="1"/>
</dbReference>
<dbReference type="Gene3D" id="3.20.20.70">
    <property type="entry name" value="Aldolase class I"/>
    <property type="match status" value="1"/>
</dbReference>
<dbReference type="HAMAP" id="MF_00418">
    <property type="entry name" value="DapA"/>
    <property type="match status" value="1"/>
</dbReference>
<dbReference type="InterPro" id="IPR013785">
    <property type="entry name" value="Aldolase_TIM"/>
</dbReference>
<dbReference type="InterPro" id="IPR005263">
    <property type="entry name" value="DapA"/>
</dbReference>
<dbReference type="InterPro" id="IPR002220">
    <property type="entry name" value="DapA-like"/>
</dbReference>
<dbReference type="InterPro" id="IPR020625">
    <property type="entry name" value="Schiff_base-form_aldolases_AS"/>
</dbReference>
<dbReference type="InterPro" id="IPR020624">
    <property type="entry name" value="Schiff_base-form_aldolases_CS"/>
</dbReference>
<dbReference type="NCBIfam" id="TIGR00674">
    <property type="entry name" value="dapA"/>
    <property type="match status" value="1"/>
</dbReference>
<dbReference type="PANTHER" id="PTHR12128:SF66">
    <property type="entry name" value="4-HYDROXY-2-OXOGLUTARATE ALDOLASE, MITOCHONDRIAL"/>
    <property type="match status" value="1"/>
</dbReference>
<dbReference type="PANTHER" id="PTHR12128">
    <property type="entry name" value="DIHYDRODIPICOLINATE SYNTHASE"/>
    <property type="match status" value="1"/>
</dbReference>
<dbReference type="Pfam" id="PF00701">
    <property type="entry name" value="DHDPS"/>
    <property type="match status" value="1"/>
</dbReference>
<dbReference type="PIRSF" id="PIRSF001365">
    <property type="entry name" value="DHDPS"/>
    <property type="match status" value="1"/>
</dbReference>
<dbReference type="PRINTS" id="PR00146">
    <property type="entry name" value="DHPICSNTHASE"/>
</dbReference>
<dbReference type="SMART" id="SM01130">
    <property type="entry name" value="DHDPS"/>
    <property type="match status" value="1"/>
</dbReference>
<dbReference type="SUPFAM" id="SSF51569">
    <property type="entry name" value="Aldolase"/>
    <property type="match status" value="1"/>
</dbReference>
<dbReference type="PROSITE" id="PS00665">
    <property type="entry name" value="DHDPS_1"/>
    <property type="match status" value="1"/>
</dbReference>
<dbReference type="PROSITE" id="PS00666">
    <property type="entry name" value="DHDPS_2"/>
    <property type="match status" value="1"/>
</dbReference>
<name>DAPA_STRM5</name>